<keyword id="KW-0028">Amino-acid biosynthesis</keyword>
<keyword id="KW-0963">Cytoplasm</keyword>
<keyword id="KW-0220">Diaminopimelate biosynthesis</keyword>
<keyword id="KW-0456">Lyase</keyword>
<keyword id="KW-0457">Lysine biosynthesis</keyword>
<keyword id="KW-1185">Reference proteome</keyword>
<keyword id="KW-0704">Schiff base</keyword>
<dbReference type="EC" id="4.3.3.7" evidence="1"/>
<dbReference type="EMBL" id="AE014133">
    <property type="protein sequence ID" value="AAN58691.1"/>
    <property type="molecule type" value="Genomic_DNA"/>
</dbReference>
<dbReference type="RefSeq" id="NP_721385.1">
    <property type="nucleotide sequence ID" value="NC_004350.2"/>
</dbReference>
<dbReference type="RefSeq" id="WP_002262854.1">
    <property type="nucleotide sequence ID" value="NC_004350.2"/>
</dbReference>
<dbReference type="SMR" id="Q8DUE5"/>
<dbReference type="STRING" id="210007.SMU_990"/>
<dbReference type="GeneID" id="93859499"/>
<dbReference type="KEGG" id="smu:SMU_990"/>
<dbReference type="PATRIC" id="fig|210007.7.peg.883"/>
<dbReference type="eggNOG" id="COG0329">
    <property type="taxonomic scope" value="Bacteria"/>
</dbReference>
<dbReference type="HOGENOM" id="CLU_049343_7_1_9"/>
<dbReference type="OrthoDB" id="9782828at2"/>
<dbReference type="PhylomeDB" id="Q8DUE5"/>
<dbReference type="UniPathway" id="UPA00034">
    <property type="reaction ID" value="UER00017"/>
</dbReference>
<dbReference type="Proteomes" id="UP000002512">
    <property type="component" value="Chromosome"/>
</dbReference>
<dbReference type="GO" id="GO:0005829">
    <property type="term" value="C:cytosol"/>
    <property type="evidence" value="ECO:0007669"/>
    <property type="project" value="TreeGrafter"/>
</dbReference>
<dbReference type="GO" id="GO:0008840">
    <property type="term" value="F:4-hydroxy-tetrahydrodipicolinate synthase activity"/>
    <property type="evidence" value="ECO:0007669"/>
    <property type="project" value="UniProtKB-UniRule"/>
</dbReference>
<dbReference type="GO" id="GO:0019877">
    <property type="term" value="P:diaminopimelate biosynthetic process"/>
    <property type="evidence" value="ECO:0007669"/>
    <property type="project" value="UniProtKB-UniRule"/>
</dbReference>
<dbReference type="GO" id="GO:0009089">
    <property type="term" value="P:lysine biosynthetic process via diaminopimelate"/>
    <property type="evidence" value="ECO:0007669"/>
    <property type="project" value="UniProtKB-UniRule"/>
</dbReference>
<dbReference type="CDD" id="cd00950">
    <property type="entry name" value="DHDPS"/>
    <property type="match status" value="1"/>
</dbReference>
<dbReference type="Gene3D" id="3.20.20.70">
    <property type="entry name" value="Aldolase class I"/>
    <property type="match status" value="1"/>
</dbReference>
<dbReference type="HAMAP" id="MF_00418">
    <property type="entry name" value="DapA"/>
    <property type="match status" value="1"/>
</dbReference>
<dbReference type="InterPro" id="IPR013785">
    <property type="entry name" value="Aldolase_TIM"/>
</dbReference>
<dbReference type="InterPro" id="IPR005263">
    <property type="entry name" value="DapA"/>
</dbReference>
<dbReference type="InterPro" id="IPR002220">
    <property type="entry name" value="DapA-like"/>
</dbReference>
<dbReference type="InterPro" id="IPR020625">
    <property type="entry name" value="Schiff_base-form_aldolases_AS"/>
</dbReference>
<dbReference type="NCBIfam" id="TIGR00674">
    <property type="entry name" value="dapA"/>
    <property type="match status" value="1"/>
</dbReference>
<dbReference type="PANTHER" id="PTHR12128:SF66">
    <property type="entry name" value="4-HYDROXY-2-OXOGLUTARATE ALDOLASE, MITOCHONDRIAL"/>
    <property type="match status" value="1"/>
</dbReference>
<dbReference type="PANTHER" id="PTHR12128">
    <property type="entry name" value="DIHYDRODIPICOLINATE SYNTHASE"/>
    <property type="match status" value="1"/>
</dbReference>
<dbReference type="Pfam" id="PF00701">
    <property type="entry name" value="DHDPS"/>
    <property type="match status" value="1"/>
</dbReference>
<dbReference type="PIRSF" id="PIRSF001365">
    <property type="entry name" value="DHDPS"/>
    <property type="match status" value="1"/>
</dbReference>
<dbReference type="PRINTS" id="PR00146">
    <property type="entry name" value="DHPICSNTHASE"/>
</dbReference>
<dbReference type="SMART" id="SM01130">
    <property type="entry name" value="DHDPS"/>
    <property type="match status" value="1"/>
</dbReference>
<dbReference type="SUPFAM" id="SSF51569">
    <property type="entry name" value="Aldolase"/>
    <property type="match status" value="1"/>
</dbReference>
<dbReference type="PROSITE" id="PS00666">
    <property type="entry name" value="DHDPS_2"/>
    <property type="match status" value="1"/>
</dbReference>
<feature type="chain" id="PRO_0000103167" description="4-hydroxy-tetrahydrodipicolinate synthase">
    <location>
        <begin position="1"/>
        <end position="293"/>
    </location>
</feature>
<feature type="active site" description="Proton donor/acceptor" evidence="1">
    <location>
        <position position="140"/>
    </location>
</feature>
<feature type="active site" description="Schiff-base intermediate with substrate" evidence="1">
    <location>
        <position position="168"/>
    </location>
</feature>
<feature type="binding site" evidence="1">
    <location>
        <position position="51"/>
    </location>
    <ligand>
        <name>pyruvate</name>
        <dbReference type="ChEBI" id="CHEBI:15361"/>
    </ligand>
</feature>
<feature type="binding site" evidence="1">
    <location>
        <position position="209"/>
    </location>
    <ligand>
        <name>pyruvate</name>
        <dbReference type="ChEBI" id="CHEBI:15361"/>
    </ligand>
</feature>
<feature type="site" description="Part of a proton relay during catalysis" evidence="1">
    <location>
        <position position="50"/>
    </location>
</feature>
<feature type="site" description="Part of a proton relay during catalysis" evidence="1">
    <location>
        <position position="114"/>
    </location>
</feature>
<accession>Q8DUE5</accession>
<organism>
    <name type="scientific">Streptococcus mutans serotype c (strain ATCC 700610 / UA159)</name>
    <dbReference type="NCBI Taxonomy" id="210007"/>
    <lineage>
        <taxon>Bacteria</taxon>
        <taxon>Bacillati</taxon>
        <taxon>Bacillota</taxon>
        <taxon>Bacilli</taxon>
        <taxon>Lactobacillales</taxon>
        <taxon>Streptococcaceae</taxon>
        <taxon>Streptococcus</taxon>
    </lineage>
</organism>
<name>DAPA_STRMU</name>
<evidence type="ECO:0000255" key="1">
    <source>
        <dbReference type="HAMAP-Rule" id="MF_00418"/>
    </source>
</evidence>
<evidence type="ECO:0000305" key="2"/>
<reference key="1">
    <citation type="journal article" date="2002" name="Proc. Natl. Acad. Sci. U.S.A.">
        <title>Genome sequence of Streptococcus mutans UA159, a cariogenic dental pathogen.</title>
        <authorList>
            <person name="Ajdic D.J."/>
            <person name="McShan W.M."/>
            <person name="McLaughlin R.E."/>
            <person name="Savic G."/>
            <person name="Chang J."/>
            <person name="Carson M.B."/>
            <person name="Primeaux C."/>
            <person name="Tian R."/>
            <person name="Kenton S."/>
            <person name="Jia H.G."/>
            <person name="Lin S.P."/>
            <person name="Qian Y."/>
            <person name="Li S."/>
            <person name="Zhu H."/>
            <person name="Najar F.Z."/>
            <person name="Lai H."/>
            <person name="White J."/>
            <person name="Roe B.A."/>
            <person name="Ferretti J.J."/>
        </authorList>
    </citation>
    <scope>NUCLEOTIDE SEQUENCE [LARGE SCALE GENOMIC DNA]</scope>
    <source>
        <strain>ATCC 700610 / UA159</strain>
    </source>
</reference>
<comment type="function">
    <text evidence="1">Catalyzes the condensation of (S)-aspartate-beta-semialdehyde [(S)-ASA] and pyruvate to 4-hydroxy-tetrahydrodipicolinate (HTPA).</text>
</comment>
<comment type="catalytic activity">
    <reaction evidence="1">
        <text>L-aspartate 4-semialdehyde + pyruvate = (2S,4S)-4-hydroxy-2,3,4,5-tetrahydrodipicolinate + H2O + H(+)</text>
        <dbReference type="Rhea" id="RHEA:34171"/>
        <dbReference type="ChEBI" id="CHEBI:15361"/>
        <dbReference type="ChEBI" id="CHEBI:15377"/>
        <dbReference type="ChEBI" id="CHEBI:15378"/>
        <dbReference type="ChEBI" id="CHEBI:67139"/>
        <dbReference type="ChEBI" id="CHEBI:537519"/>
        <dbReference type="EC" id="4.3.3.7"/>
    </reaction>
</comment>
<comment type="pathway">
    <text evidence="1">Amino-acid biosynthesis; L-lysine biosynthesis via DAP pathway; (S)-tetrahydrodipicolinate from L-aspartate: step 3/4.</text>
</comment>
<comment type="subunit">
    <text evidence="1">Homotetramer; dimer of dimers.</text>
</comment>
<comment type="subcellular location">
    <subcellularLocation>
        <location evidence="1">Cytoplasm</location>
    </subcellularLocation>
</comment>
<comment type="similarity">
    <text evidence="1">Belongs to the DapA family.</text>
</comment>
<comment type="caution">
    <text evidence="2">Was originally thought to be a dihydrodipicolinate synthase (DHDPS), catalyzing the condensation of (S)-aspartate-beta-semialdehyde [(S)-ASA] and pyruvate to dihydrodipicolinate (DHDP). However, it was shown in E.coli that the product of the enzymatic reaction is not dihydrodipicolinate but in fact (4S)-4-hydroxy-2,3,4,5-tetrahydro-(2S)-dipicolinic acid (HTPA), and that the consecutive dehydration reaction leading to DHDP is not spontaneous but catalyzed by DapB.</text>
</comment>
<sequence>MSIQDFKDVNIITAFITPFKEDGSINFAALPKLIEHLLAHHTQGLLLAGTTAESPTLTHDEELELFAAVQKIVNGRVPLIAGVGTNDTRDSVNFVKEVADFGGFSAGLAIVPYYNKPTQEGLYQHFMTLADASDLPIIIYNIPGRVVTTLETDTMLRLAQHPNIIGVKECTNLDNIAYLVDNKPDDFLIFTGEDGEAFHALSLGADGVISVASHTNGDELFAMVEAIEKSDIKKAAGIQRQFLPKVHALFSVASPAPVKAVLNHQGFDAGPLRLPLVACTDEEARRIIEIVEK</sequence>
<gene>
    <name evidence="1" type="primary">dapA</name>
    <name type="ordered locus">SMU_990</name>
</gene>
<proteinExistence type="inferred from homology"/>
<protein>
    <recommendedName>
        <fullName evidence="1">4-hydroxy-tetrahydrodipicolinate synthase</fullName>
        <shortName evidence="1">HTPA synthase</shortName>
        <ecNumber evidence="1">4.3.3.7</ecNumber>
    </recommendedName>
</protein>